<reference key="1">
    <citation type="submission" date="2008-05" db="EMBL/GenBank/DDBJ databases">
        <title>Complete sequence of Shigella boydii serotype 18 strain BS512.</title>
        <authorList>
            <person name="Rasko D.A."/>
            <person name="Rosovitz M."/>
            <person name="Maurelli A.T."/>
            <person name="Myers G."/>
            <person name="Seshadri R."/>
            <person name="Cer R."/>
            <person name="Jiang L."/>
            <person name="Ravel J."/>
            <person name="Sebastian Y."/>
        </authorList>
    </citation>
    <scope>NUCLEOTIDE SEQUENCE [LARGE SCALE GENOMIC DNA]</scope>
    <source>
        <strain>CDC 3083-94 / BS512</strain>
    </source>
</reference>
<keyword id="KW-0030">Aminoacyl-tRNA synthetase</keyword>
<keyword id="KW-0067">ATP-binding</keyword>
<keyword id="KW-0963">Cytoplasm</keyword>
<keyword id="KW-0436">Ligase</keyword>
<keyword id="KW-0547">Nucleotide-binding</keyword>
<keyword id="KW-0648">Protein biosynthesis</keyword>
<keyword id="KW-1185">Reference proteome</keyword>
<evidence type="ECO:0000255" key="1">
    <source>
        <dbReference type="HAMAP-Rule" id="MF_00254"/>
    </source>
</evidence>
<protein>
    <recommendedName>
        <fullName evidence="1">Glycine--tRNA ligase alpha subunit</fullName>
        <ecNumber evidence="1">6.1.1.14</ecNumber>
    </recommendedName>
    <alternativeName>
        <fullName evidence="1">Glycyl-tRNA synthetase alpha subunit</fullName>
        <shortName evidence="1">GlyRS</shortName>
    </alternativeName>
</protein>
<gene>
    <name evidence="1" type="primary">glyQ</name>
    <name type="ordered locus">SbBS512_E3965</name>
</gene>
<sequence>MQKFDTRTFQGLILTLQDYWARQGCTIVQPLDMEVGAGTSHPMTCLRALGPEPMAAAYVQPSRRPTDGRYGENPNRLQHYYQFQVVIKPSPDNIQELYLGSLKELGMDPTIHDIRFVEDNWENPTLGAWGLGWEVWLNGMEVTQFTYFQQVGGLECKPVTGEITYGLERLAMYIQGVDSVYDLVWSDGPLGKTTYGDVFHQNEVEQSTYNFEYADVDFLFTCFEQYEKEAQQLLALENPLPLPAYERILKAAHSFNLLDARKAISVTERQRYILRIRTLTKAVAEAYYASREALGFPMCNKDK</sequence>
<dbReference type="EC" id="6.1.1.14" evidence="1"/>
<dbReference type="EMBL" id="CP001063">
    <property type="protein sequence ID" value="ACD07339.1"/>
    <property type="molecule type" value="Genomic_DNA"/>
</dbReference>
<dbReference type="RefSeq" id="WP_001168544.1">
    <property type="nucleotide sequence ID" value="NC_010658.1"/>
</dbReference>
<dbReference type="SMR" id="B2U565"/>
<dbReference type="STRING" id="344609.SbBS512_E3965"/>
<dbReference type="GeneID" id="93778290"/>
<dbReference type="KEGG" id="sbc:SbBS512_E3965"/>
<dbReference type="HOGENOM" id="CLU_057066_1_0_6"/>
<dbReference type="Proteomes" id="UP000001030">
    <property type="component" value="Chromosome"/>
</dbReference>
<dbReference type="GO" id="GO:0005829">
    <property type="term" value="C:cytosol"/>
    <property type="evidence" value="ECO:0007669"/>
    <property type="project" value="TreeGrafter"/>
</dbReference>
<dbReference type="GO" id="GO:0005524">
    <property type="term" value="F:ATP binding"/>
    <property type="evidence" value="ECO:0007669"/>
    <property type="project" value="UniProtKB-UniRule"/>
</dbReference>
<dbReference type="GO" id="GO:0004820">
    <property type="term" value="F:glycine-tRNA ligase activity"/>
    <property type="evidence" value="ECO:0007669"/>
    <property type="project" value="UniProtKB-UniRule"/>
</dbReference>
<dbReference type="GO" id="GO:0006426">
    <property type="term" value="P:glycyl-tRNA aminoacylation"/>
    <property type="evidence" value="ECO:0007669"/>
    <property type="project" value="UniProtKB-UniRule"/>
</dbReference>
<dbReference type="CDD" id="cd00733">
    <property type="entry name" value="GlyRS_alpha_core"/>
    <property type="match status" value="1"/>
</dbReference>
<dbReference type="FunFam" id="1.20.58.180:FF:000001">
    <property type="entry name" value="Glycine--tRNA ligase alpha subunit"/>
    <property type="match status" value="1"/>
</dbReference>
<dbReference type="FunFam" id="3.30.930.10:FF:000006">
    <property type="entry name" value="Glycine--tRNA ligase alpha subunit"/>
    <property type="match status" value="1"/>
</dbReference>
<dbReference type="Gene3D" id="3.30.930.10">
    <property type="entry name" value="Bira Bifunctional Protein, Domain 2"/>
    <property type="match status" value="1"/>
</dbReference>
<dbReference type="Gene3D" id="1.20.58.180">
    <property type="entry name" value="Class II aaRS and biotin synthetases, domain 2"/>
    <property type="match status" value="1"/>
</dbReference>
<dbReference type="HAMAP" id="MF_00254">
    <property type="entry name" value="Gly_tRNA_synth_alpha"/>
    <property type="match status" value="1"/>
</dbReference>
<dbReference type="InterPro" id="IPR045864">
    <property type="entry name" value="aa-tRNA-synth_II/BPL/LPL"/>
</dbReference>
<dbReference type="InterPro" id="IPR006194">
    <property type="entry name" value="Gly-tRNA-synth_heterodimer"/>
</dbReference>
<dbReference type="InterPro" id="IPR002310">
    <property type="entry name" value="Gly-tRNA_ligase_asu"/>
</dbReference>
<dbReference type="NCBIfam" id="TIGR00388">
    <property type="entry name" value="glyQ"/>
    <property type="match status" value="1"/>
</dbReference>
<dbReference type="NCBIfam" id="NF006827">
    <property type="entry name" value="PRK09348.1"/>
    <property type="match status" value="1"/>
</dbReference>
<dbReference type="PANTHER" id="PTHR30075:SF2">
    <property type="entry name" value="GLYCINE--TRNA LIGASE, CHLOROPLASTIC_MITOCHONDRIAL 2"/>
    <property type="match status" value="1"/>
</dbReference>
<dbReference type="PANTHER" id="PTHR30075">
    <property type="entry name" value="GLYCYL-TRNA SYNTHETASE"/>
    <property type="match status" value="1"/>
</dbReference>
<dbReference type="Pfam" id="PF02091">
    <property type="entry name" value="tRNA-synt_2e"/>
    <property type="match status" value="1"/>
</dbReference>
<dbReference type="PRINTS" id="PR01044">
    <property type="entry name" value="TRNASYNTHGA"/>
</dbReference>
<dbReference type="SUPFAM" id="SSF55681">
    <property type="entry name" value="Class II aaRS and biotin synthetases"/>
    <property type="match status" value="1"/>
</dbReference>
<dbReference type="PROSITE" id="PS50861">
    <property type="entry name" value="AA_TRNA_LIGASE_II_GLYAB"/>
    <property type="match status" value="1"/>
</dbReference>
<accession>B2U565</accession>
<proteinExistence type="inferred from homology"/>
<name>SYGA_SHIB3</name>
<organism>
    <name type="scientific">Shigella boydii serotype 18 (strain CDC 3083-94 / BS512)</name>
    <dbReference type="NCBI Taxonomy" id="344609"/>
    <lineage>
        <taxon>Bacteria</taxon>
        <taxon>Pseudomonadati</taxon>
        <taxon>Pseudomonadota</taxon>
        <taxon>Gammaproteobacteria</taxon>
        <taxon>Enterobacterales</taxon>
        <taxon>Enterobacteriaceae</taxon>
        <taxon>Shigella</taxon>
    </lineage>
</organism>
<comment type="catalytic activity">
    <reaction evidence="1">
        <text>tRNA(Gly) + glycine + ATP = glycyl-tRNA(Gly) + AMP + diphosphate</text>
        <dbReference type="Rhea" id="RHEA:16013"/>
        <dbReference type="Rhea" id="RHEA-COMP:9664"/>
        <dbReference type="Rhea" id="RHEA-COMP:9683"/>
        <dbReference type="ChEBI" id="CHEBI:30616"/>
        <dbReference type="ChEBI" id="CHEBI:33019"/>
        <dbReference type="ChEBI" id="CHEBI:57305"/>
        <dbReference type="ChEBI" id="CHEBI:78442"/>
        <dbReference type="ChEBI" id="CHEBI:78522"/>
        <dbReference type="ChEBI" id="CHEBI:456215"/>
        <dbReference type="EC" id="6.1.1.14"/>
    </reaction>
</comment>
<comment type="subunit">
    <text evidence="1">Tetramer of two alpha and two beta subunits.</text>
</comment>
<comment type="subcellular location">
    <subcellularLocation>
        <location evidence="1">Cytoplasm</location>
    </subcellularLocation>
</comment>
<comment type="similarity">
    <text evidence="1">Belongs to the class-II aminoacyl-tRNA synthetase family.</text>
</comment>
<feature type="chain" id="PRO_1000101231" description="Glycine--tRNA ligase alpha subunit">
    <location>
        <begin position="1"/>
        <end position="303"/>
    </location>
</feature>